<gene>
    <name type="primary">c8b</name>
</gene>
<sequence>MNHKLKPTVGLGYCLLCAALCLLLLRDVAIAGSGEEPSGVREARSVGTQVAVQPVDCVQSEWSSWTRCDVCRKKRYRYAKLVQPSQFGGEPCHVQGKEVEPCSPPSRYDCTHDETPLCEGFLCTYTGRCVPIDLRCNGDDDCGDWSAEKGSPKVPKACKQEAQEYHGIENLAKGINILHSHLEGSVIDNRYYAGSCLPHYIQDVRFRKPYNLQQYTLETKGTYDFKLQSFESYSEFVHYTMTERSSKTTVSIGFALPGVAEFGFNYADSKYSKSEKKIRRASRKENSFVQAKAELQLARYILKSEDLMLHPEFFLRLRALPQSYNYGEYRQIYRDYGTHYITEATLGGDYEYTVILDKEKLEKTGYSLEAYKNCEQIVLKVGANIKGVYVTVGLEGGGCDGLLNEMGEDTVKGSMVEDYVAVVSGGDSESITWLAAKNLPTPPLMRLWGEAVHYNLDFIRSVTRPLYELVTARDFSSANSLKKNLRRALAEYLEESSSCRCAPCRNNGLAVLKGTRCECVCPSGYSGLGCEITQRPDIGIDGSWSCWGSWSPCRGRSKTRSRQCNNPAPSSGGIACRGLQMETTDCF</sequence>
<comment type="function">
    <text evidence="1">Component of the membrane attack complex (MAC), a multiprotein complex activated by the complement cascade, which inserts into a target cell membrane and forms a pore, leading to target cell membrane rupture and cell lysis. The MAC is initiated by proteolytic cleavage of C5 into complement C5b in response to the classical, alternative, lectin and GZMK complement pathways. The complement pathways consist in a cascade of proteins that leads to phagocytosis and breakdown of pathogens and signaling that strengthens the adaptive immune system. C8B, together with C8A and C8G, inserts into the target membrane, but does not form pores by itself. During MAC assembly, associates with C5b, C6 and C7 to form the C5b8 intermediate complex that inserts into the target membrane and traverses the bilayer increasing membrane rigidity.</text>
</comment>
<comment type="subunit">
    <text evidence="1">Heterotrimer of 3 chains: alpha (C8A), beta (C8B) and gamma (C8G); the alpha and gamma chains are disulfide bonded. Component of the membrane attack complex (MAC), composed of complement C5b, C6, C7, C8A, C8B, C8G and multiple copies of the pore-forming subunit C9.</text>
</comment>
<comment type="subcellular location">
    <subcellularLocation>
        <location evidence="1">Secreted</location>
    </subcellularLocation>
    <subcellularLocation>
        <location evidence="1">Target cell membrane</location>
        <topology evidence="1">Multi-pass membrane protein</topology>
    </subcellularLocation>
    <text evidence="1">Secreted as soluble protein. Inserts into the cell membrane of target cells.</text>
</comment>
<comment type="similarity">
    <text evidence="6">Belongs to the complement C6/C7/C8/C9 family.</text>
</comment>
<evidence type="ECO:0000250" key="1">
    <source>
        <dbReference type="UniProtKB" id="P07358"/>
    </source>
</evidence>
<evidence type="ECO:0000255" key="2"/>
<evidence type="ECO:0000255" key="3">
    <source>
        <dbReference type="PROSITE-ProRule" id="PRU00124"/>
    </source>
</evidence>
<evidence type="ECO:0000255" key="4">
    <source>
        <dbReference type="PROSITE-ProRule" id="PRU00210"/>
    </source>
</evidence>
<evidence type="ECO:0000255" key="5">
    <source>
        <dbReference type="PROSITE-ProRule" id="PRU00745"/>
    </source>
</evidence>
<evidence type="ECO:0000305" key="6"/>
<name>CO8B_ONCMY</name>
<feature type="signal peptide" evidence="2">
    <location>
        <begin position="1"/>
        <end position="31"/>
    </location>
</feature>
<feature type="propeptide" id="PRO_0000023597" evidence="1">
    <location>
        <begin position="32"/>
        <end position="44"/>
    </location>
</feature>
<feature type="chain" id="PRO_0000023598" description="Complement component C8 beta chain">
    <location>
        <begin position="45"/>
        <end position="587"/>
    </location>
</feature>
<feature type="transmembrane region" description="Beta stranded" evidence="1">
    <location>
        <begin position="248"/>
        <end position="255"/>
    </location>
</feature>
<feature type="transmembrane region" description="Beta stranded" evidence="1">
    <location>
        <begin position="258"/>
        <end position="265"/>
    </location>
</feature>
<feature type="transmembrane region" description="Beta stranded" evidence="1">
    <location>
        <begin position="375"/>
        <end position="382"/>
    </location>
</feature>
<feature type="transmembrane region" description="Beta stranded" evidence="1">
    <location>
        <begin position="388"/>
        <end position="395"/>
    </location>
</feature>
<feature type="domain" description="TSP type-1 1" evidence="4">
    <location>
        <begin position="56"/>
        <end position="111"/>
    </location>
</feature>
<feature type="domain" description="LDL-receptor class A" evidence="3">
    <location>
        <begin position="117"/>
        <end position="159"/>
    </location>
</feature>
<feature type="domain" description="MACPF" evidence="5">
    <location>
        <begin position="154"/>
        <end position="500"/>
    </location>
</feature>
<feature type="domain" description="EGF-like">
    <location>
        <begin position="501"/>
        <end position="531"/>
    </location>
</feature>
<feature type="domain" description="TSP type-1 2" evidence="4">
    <location>
        <begin position="541"/>
        <end position="587"/>
    </location>
</feature>
<feature type="binding site" evidence="1">
    <location>
        <position position="134"/>
    </location>
    <ligand>
        <name>Ca(2+)</name>
        <dbReference type="ChEBI" id="CHEBI:29108"/>
    </ligand>
</feature>
<feature type="binding site" evidence="1">
    <location>
        <position position="137"/>
    </location>
    <ligand>
        <name>Ca(2+)</name>
        <dbReference type="ChEBI" id="CHEBI:29108"/>
    </ligand>
</feature>
<feature type="binding site" evidence="1">
    <location>
        <position position="139"/>
    </location>
    <ligand>
        <name>Ca(2+)</name>
        <dbReference type="ChEBI" id="CHEBI:29108"/>
    </ligand>
</feature>
<feature type="binding site" evidence="1">
    <location>
        <position position="141"/>
    </location>
    <ligand>
        <name>Ca(2+)</name>
        <dbReference type="ChEBI" id="CHEBI:29108"/>
    </ligand>
</feature>
<feature type="binding site" evidence="1">
    <location>
        <position position="148"/>
    </location>
    <ligand>
        <name>Ca(2+)</name>
        <dbReference type="ChEBI" id="CHEBI:29108"/>
    </ligand>
</feature>
<feature type="glycosylation site" description="C-linked (Man) tryptophan" evidence="1">
    <location>
        <position position="62"/>
    </location>
</feature>
<feature type="glycosylation site" description="C-linked (Man) tryptophan" evidence="1">
    <location>
        <position position="65"/>
    </location>
</feature>
<feature type="glycosylation site" description="C-linked (Man) tryptophan" evidence="1">
    <location>
        <position position="547"/>
    </location>
</feature>
<feature type="glycosylation site" description="C-linked (Man) tryptophan" evidence="1">
    <location>
        <position position="550"/>
    </location>
</feature>
<feature type="disulfide bond" evidence="1">
    <location>
        <begin position="57"/>
        <end position="92"/>
    </location>
</feature>
<feature type="disulfide bond" evidence="1">
    <location>
        <begin position="68"/>
        <end position="102"/>
    </location>
</feature>
<feature type="disulfide bond" evidence="1">
    <location>
        <begin position="71"/>
        <end position="110"/>
    </location>
</feature>
<feature type="disulfide bond" evidence="1">
    <location>
        <begin position="118"/>
        <end position="129"/>
    </location>
</feature>
<feature type="disulfide bond" evidence="1">
    <location>
        <begin position="123"/>
        <end position="142"/>
    </location>
</feature>
<feature type="disulfide bond" evidence="1">
    <location>
        <begin position="158"/>
        <end position="196"/>
    </location>
</feature>
<feature type="disulfide bond" evidence="1">
    <location>
        <begin position="374"/>
        <end position="399"/>
    </location>
</feature>
<feature type="disulfide bond" evidence="1">
    <location>
        <begin position="499"/>
        <end position="546"/>
    </location>
</feature>
<feature type="disulfide bond" evidence="1">
    <location>
        <begin position="501"/>
        <end position="517"/>
    </location>
</feature>
<feature type="disulfide bond" evidence="1">
    <location>
        <begin position="504"/>
        <end position="519"/>
    </location>
</feature>
<feature type="disulfide bond" evidence="1">
    <location>
        <begin position="521"/>
        <end position="530"/>
    </location>
</feature>
<feature type="disulfide bond" evidence="1">
    <location>
        <begin position="553"/>
        <end position="586"/>
    </location>
</feature>
<organism>
    <name type="scientific">Oncorhynchus mykiss</name>
    <name type="common">Rainbow trout</name>
    <name type="synonym">Salmo gairdneri</name>
    <dbReference type="NCBI Taxonomy" id="8022"/>
    <lineage>
        <taxon>Eukaryota</taxon>
        <taxon>Metazoa</taxon>
        <taxon>Chordata</taxon>
        <taxon>Craniata</taxon>
        <taxon>Vertebrata</taxon>
        <taxon>Euteleostomi</taxon>
        <taxon>Actinopterygii</taxon>
        <taxon>Neopterygii</taxon>
        <taxon>Teleostei</taxon>
        <taxon>Protacanthopterygii</taxon>
        <taxon>Salmoniformes</taxon>
        <taxon>Salmonidae</taxon>
        <taxon>Salmoninae</taxon>
        <taxon>Oncorhynchus</taxon>
    </lineage>
</organism>
<proteinExistence type="evidence at transcript level"/>
<accession>Q90X85</accession>
<reference key="1">
    <citation type="journal article" date="2003" name="Dev. Comp. Immunol.">
        <title>Molecular cloning of the beta subunit of complement component eight of rainbow trout.</title>
        <authorList>
            <person name="Kazantzi A."/>
            <person name="Sfyroera G."/>
            <person name="Holland M.C.H."/>
            <person name="Lambris J.D."/>
            <person name="Zarkadis I.K."/>
        </authorList>
    </citation>
    <scope>NUCLEOTIDE SEQUENCE [MRNA]</scope>
</reference>
<dbReference type="EMBL" id="AF418597">
    <property type="protein sequence ID" value="AAL16647.1"/>
    <property type="molecule type" value="mRNA"/>
</dbReference>
<dbReference type="RefSeq" id="NP_001118079.1">
    <property type="nucleotide sequence ID" value="NM_001124607.1"/>
</dbReference>
<dbReference type="SMR" id="Q90X85"/>
<dbReference type="GlyCosmos" id="Q90X85">
    <property type="glycosylation" value="4 sites, No reported glycans"/>
</dbReference>
<dbReference type="GeneID" id="100136625"/>
<dbReference type="KEGG" id="omy:100136625"/>
<dbReference type="CTD" id="732"/>
<dbReference type="OrthoDB" id="6150863at2759"/>
<dbReference type="Proteomes" id="UP000694395">
    <property type="component" value="Unplaced"/>
</dbReference>
<dbReference type="GO" id="GO:0005576">
    <property type="term" value="C:extracellular region"/>
    <property type="evidence" value="ECO:0007669"/>
    <property type="project" value="UniProtKB-SubCell"/>
</dbReference>
<dbReference type="GO" id="GO:0005579">
    <property type="term" value="C:membrane attack complex"/>
    <property type="evidence" value="ECO:0007669"/>
    <property type="project" value="UniProtKB-KW"/>
</dbReference>
<dbReference type="GO" id="GO:0006957">
    <property type="term" value="P:complement activation, alternative pathway"/>
    <property type="evidence" value="ECO:0007669"/>
    <property type="project" value="UniProtKB-KW"/>
</dbReference>
<dbReference type="GO" id="GO:0006958">
    <property type="term" value="P:complement activation, classical pathway"/>
    <property type="evidence" value="ECO:0007669"/>
    <property type="project" value="UniProtKB-KW"/>
</dbReference>
<dbReference type="GO" id="GO:0031640">
    <property type="term" value="P:killing of cells of another organism"/>
    <property type="evidence" value="ECO:0007669"/>
    <property type="project" value="UniProtKB-KW"/>
</dbReference>
<dbReference type="CDD" id="cd00112">
    <property type="entry name" value="LDLa"/>
    <property type="match status" value="1"/>
</dbReference>
<dbReference type="Gene3D" id="2.10.25.10">
    <property type="entry name" value="Laminin"/>
    <property type="match status" value="1"/>
</dbReference>
<dbReference type="Gene3D" id="4.10.400.10">
    <property type="entry name" value="Low-density Lipoprotein Receptor"/>
    <property type="match status" value="1"/>
</dbReference>
<dbReference type="Gene3D" id="2.20.100.10">
    <property type="entry name" value="Thrombospondin type-1 (TSP1) repeat"/>
    <property type="match status" value="2"/>
</dbReference>
<dbReference type="InterPro" id="IPR048831">
    <property type="entry name" value="C8A_B_C6_EGF-like"/>
</dbReference>
<dbReference type="InterPro" id="IPR036055">
    <property type="entry name" value="LDL_receptor-like_sf"/>
</dbReference>
<dbReference type="InterPro" id="IPR002172">
    <property type="entry name" value="LDrepeatLR_classA_rpt"/>
</dbReference>
<dbReference type="InterPro" id="IPR001862">
    <property type="entry name" value="MAC_perforin"/>
</dbReference>
<dbReference type="InterPro" id="IPR020864">
    <property type="entry name" value="MACPF"/>
</dbReference>
<dbReference type="InterPro" id="IPR020863">
    <property type="entry name" value="MACPF_CS"/>
</dbReference>
<dbReference type="InterPro" id="IPR000884">
    <property type="entry name" value="TSP1_rpt"/>
</dbReference>
<dbReference type="InterPro" id="IPR036383">
    <property type="entry name" value="TSP1_rpt_sf"/>
</dbReference>
<dbReference type="PANTHER" id="PTHR45742">
    <property type="entry name" value="COMPLEMENT COMPONENT C6"/>
    <property type="match status" value="1"/>
</dbReference>
<dbReference type="PANTHER" id="PTHR45742:SF5">
    <property type="entry name" value="COMPLEMENT COMPONENT C8 BETA CHAIN"/>
    <property type="match status" value="1"/>
</dbReference>
<dbReference type="Pfam" id="PF21195">
    <property type="entry name" value="EGF_C8A_B_C6"/>
    <property type="match status" value="1"/>
</dbReference>
<dbReference type="Pfam" id="PF00057">
    <property type="entry name" value="Ldl_recept_a"/>
    <property type="match status" value="1"/>
</dbReference>
<dbReference type="Pfam" id="PF01823">
    <property type="entry name" value="MACPF"/>
    <property type="match status" value="1"/>
</dbReference>
<dbReference type="PRINTS" id="PR00764">
    <property type="entry name" value="COMPLEMENTC9"/>
</dbReference>
<dbReference type="SMART" id="SM00192">
    <property type="entry name" value="LDLa"/>
    <property type="match status" value="1"/>
</dbReference>
<dbReference type="SMART" id="SM00457">
    <property type="entry name" value="MACPF"/>
    <property type="match status" value="1"/>
</dbReference>
<dbReference type="SMART" id="SM00209">
    <property type="entry name" value="TSP1"/>
    <property type="match status" value="2"/>
</dbReference>
<dbReference type="SUPFAM" id="SSF57424">
    <property type="entry name" value="LDL receptor-like module"/>
    <property type="match status" value="1"/>
</dbReference>
<dbReference type="SUPFAM" id="SSF82895">
    <property type="entry name" value="TSP-1 type 1 repeat"/>
    <property type="match status" value="2"/>
</dbReference>
<dbReference type="PROSITE" id="PS00022">
    <property type="entry name" value="EGF_1"/>
    <property type="match status" value="1"/>
</dbReference>
<dbReference type="PROSITE" id="PS01186">
    <property type="entry name" value="EGF_2"/>
    <property type="match status" value="1"/>
</dbReference>
<dbReference type="PROSITE" id="PS50068">
    <property type="entry name" value="LDLRA_2"/>
    <property type="match status" value="1"/>
</dbReference>
<dbReference type="PROSITE" id="PS00279">
    <property type="entry name" value="MACPF_1"/>
    <property type="match status" value="1"/>
</dbReference>
<dbReference type="PROSITE" id="PS51412">
    <property type="entry name" value="MACPF_2"/>
    <property type="match status" value="1"/>
</dbReference>
<dbReference type="PROSITE" id="PS50092">
    <property type="entry name" value="TSP1"/>
    <property type="match status" value="2"/>
</dbReference>
<keyword id="KW-0106">Calcium</keyword>
<keyword id="KW-0179">Complement alternate pathway</keyword>
<keyword id="KW-0180">Complement pathway</keyword>
<keyword id="KW-0204">Cytolysis</keyword>
<keyword id="KW-1015">Disulfide bond</keyword>
<keyword id="KW-0245">EGF-like domain</keyword>
<keyword id="KW-0325">Glycoprotein</keyword>
<keyword id="KW-0391">Immunity</keyword>
<keyword id="KW-0399">Innate immunity</keyword>
<keyword id="KW-0472">Membrane</keyword>
<keyword id="KW-0473">Membrane attack complex</keyword>
<keyword id="KW-0479">Metal-binding</keyword>
<keyword id="KW-0677">Repeat</keyword>
<keyword id="KW-0964">Secreted</keyword>
<keyword id="KW-0732">Signal</keyword>
<keyword id="KW-1052">Target cell membrane</keyword>
<keyword id="KW-1053">Target membrane</keyword>
<keyword id="KW-0812">Transmembrane</keyword>
<keyword id="KW-1134">Transmembrane beta strand</keyword>
<protein>
    <recommendedName>
        <fullName>Complement component C8 beta chain</fullName>
    </recommendedName>
    <alternativeName>
        <fullName>Complement component 8 subunit beta</fullName>
    </alternativeName>
</protein>